<name>ARR14_ARATH</name>
<reference key="1">
    <citation type="journal article" date="1999" name="Nature">
        <title>Sequence and analysis of chromosome 2 of the plant Arabidopsis thaliana.</title>
        <authorList>
            <person name="Lin X."/>
            <person name="Kaul S."/>
            <person name="Rounsley S.D."/>
            <person name="Shea T.P."/>
            <person name="Benito M.-I."/>
            <person name="Town C.D."/>
            <person name="Fujii C.Y."/>
            <person name="Mason T.M."/>
            <person name="Bowman C.L."/>
            <person name="Barnstead M.E."/>
            <person name="Feldblyum T.V."/>
            <person name="Buell C.R."/>
            <person name="Ketchum K.A."/>
            <person name="Lee J.J."/>
            <person name="Ronning C.M."/>
            <person name="Koo H.L."/>
            <person name="Moffat K.S."/>
            <person name="Cronin L.A."/>
            <person name="Shen M."/>
            <person name="Pai G."/>
            <person name="Van Aken S."/>
            <person name="Umayam L."/>
            <person name="Tallon L.J."/>
            <person name="Gill J.E."/>
            <person name="Adams M.D."/>
            <person name="Carrera A.J."/>
            <person name="Creasy T.H."/>
            <person name="Goodman H.M."/>
            <person name="Somerville C.R."/>
            <person name="Copenhaver G.P."/>
            <person name="Preuss D."/>
            <person name="Nierman W.C."/>
            <person name="White O."/>
            <person name="Eisen J.A."/>
            <person name="Salzberg S.L."/>
            <person name="Fraser C.M."/>
            <person name="Venter J.C."/>
        </authorList>
    </citation>
    <scope>NUCLEOTIDE SEQUENCE [LARGE SCALE GENOMIC DNA]</scope>
    <source>
        <strain>cv. Columbia</strain>
    </source>
</reference>
<reference key="2">
    <citation type="journal article" date="2017" name="Plant J.">
        <title>Araport11: a complete reannotation of the Arabidopsis thaliana reference genome.</title>
        <authorList>
            <person name="Cheng C.Y."/>
            <person name="Krishnakumar V."/>
            <person name="Chan A.P."/>
            <person name="Thibaud-Nissen F."/>
            <person name="Schobel S."/>
            <person name="Town C.D."/>
        </authorList>
    </citation>
    <scope>GENOME REANNOTATION</scope>
    <source>
        <strain>cv. Columbia</strain>
    </source>
</reference>
<reference key="3">
    <citation type="journal article" date="2003" name="Science">
        <title>Empirical analysis of transcriptional activity in the Arabidopsis genome.</title>
        <authorList>
            <person name="Yamada K."/>
            <person name="Lim J."/>
            <person name="Dale J.M."/>
            <person name="Chen H."/>
            <person name="Shinn P."/>
            <person name="Palm C.J."/>
            <person name="Southwick A.M."/>
            <person name="Wu H.C."/>
            <person name="Kim C.J."/>
            <person name="Nguyen M."/>
            <person name="Pham P.K."/>
            <person name="Cheuk R.F."/>
            <person name="Karlin-Newmann G."/>
            <person name="Liu S.X."/>
            <person name="Lam B."/>
            <person name="Sakano H."/>
            <person name="Wu T."/>
            <person name="Yu G."/>
            <person name="Miranda M."/>
            <person name="Quach H.L."/>
            <person name="Tripp M."/>
            <person name="Chang C.H."/>
            <person name="Lee J.M."/>
            <person name="Toriumi M.J."/>
            <person name="Chan M.M."/>
            <person name="Tang C.C."/>
            <person name="Onodera C.S."/>
            <person name="Deng J.M."/>
            <person name="Akiyama K."/>
            <person name="Ansari Y."/>
            <person name="Arakawa T."/>
            <person name="Banh J."/>
            <person name="Banno F."/>
            <person name="Bowser L."/>
            <person name="Brooks S.Y."/>
            <person name="Carninci P."/>
            <person name="Chao Q."/>
            <person name="Choy N."/>
            <person name="Enju A."/>
            <person name="Goldsmith A.D."/>
            <person name="Gurjal M."/>
            <person name="Hansen N.F."/>
            <person name="Hayashizaki Y."/>
            <person name="Johnson-Hopson C."/>
            <person name="Hsuan V.W."/>
            <person name="Iida K."/>
            <person name="Karnes M."/>
            <person name="Khan S."/>
            <person name="Koesema E."/>
            <person name="Ishida J."/>
            <person name="Jiang P.X."/>
            <person name="Jones T."/>
            <person name="Kawai J."/>
            <person name="Kamiya A."/>
            <person name="Meyers C."/>
            <person name="Nakajima M."/>
            <person name="Narusaka M."/>
            <person name="Seki M."/>
            <person name="Sakurai T."/>
            <person name="Satou M."/>
            <person name="Tamse R."/>
            <person name="Vaysberg M."/>
            <person name="Wallender E.K."/>
            <person name="Wong C."/>
            <person name="Yamamura Y."/>
            <person name="Yuan S."/>
            <person name="Shinozaki K."/>
            <person name="Davis R.W."/>
            <person name="Theologis A."/>
            <person name="Ecker J.R."/>
        </authorList>
    </citation>
    <scope>NUCLEOTIDE SEQUENCE [LARGE SCALE MRNA]</scope>
    <source>
        <strain>cv. Columbia</strain>
    </source>
</reference>
<reference key="4">
    <citation type="submission" date="2002-03" db="EMBL/GenBank/DDBJ databases">
        <title>Full-length cDNA from Arabidopsis thaliana.</title>
        <authorList>
            <person name="Brover V.V."/>
            <person name="Troukhan M.E."/>
            <person name="Alexandrov N.A."/>
            <person name="Lu Y.-P."/>
            <person name="Flavell R.B."/>
            <person name="Feldmann K.A."/>
        </authorList>
    </citation>
    <scope>NUCLEOTIDE SEQUENCE [LARGE SCALE MRNA]</scope>
</reference>
<reference key="5">
    <citation type="journal article" date="2004" name="Plant Physiol.">
        <title>Type-B response regulators display overlapping expression patterns in Arabidopsis.</title>
        <authorList>
            <person name="Mason M.G."/>
            <person name="Li J."/>
            <person name="Mathews D.E."/>
            <person name="Kieber J.J."/>
            <person name="Schaller G.E."/>
        </authorList>
    </citation>
    <scope>TISSUE SPECIFICITY</scope>
</reference>
<accession>Q8L9Y3</accession>
<accession>Q9ZUA4</accession>
<protein>
    <recommendedName>
        <fullName>Two-component response regulator ARR14</fullName>
    </recommendedName>
</protein>
<feature type="chain" id="PRO_0000132299" description="Two-component response regulator ARR14">
    <location>
        <begin position="1"/>
        <end position="382"/>
    </location>
</feature>
<feature type="domain" description="Response regulatory" evidence="3">
    <location>
        <begin position="12"/>
        <end position="128"/>
    </location>
</feature>
<feature type="DNA-binding region" description="Myb-like GARP" evidence="4">
    <location>
        <begin position="202"/>
        <end position="252"/>
    </location>
</feature>
<feature type="region of interest" description="Disordered" evidence="5">
    <location>
        <begin position="171"/>
        <end position="193"/>
    </location>
</feature>
<feature type="short sequence motif" description="Nuclear localization signal" evidence="2">
    <location>
        <begin position="199"/>
        <end position="202"/>
    </location>
</feature>
<feature type="compositionally biased region" description="Basic residues" evidence="5">
    <location>
        <begin position="171"/>
        <end position="181"/>
    </location>
</feature>
<feature type="modified residue" description="4-aspartylphosphate" evidence="3">
    <location>
        <position position="63"/>
    </location>
</feature>
<feature type="sequence conflict" description="In Ref. 4; AAM65694." evidence="7" ref="4">
    <original>D</original>
    <variation>N</variation>
    <location>
        <position position="354"/>
    </location>
</feature>
<gene>
    <name type="primary">ARR14</name>
    <name type="ordered locus">At2g01760</name>
    <name type="ORF">T8O11.7</name>
</gene>
<proteinExistence type="evidence at protein level"/>
<evidence type="ECO:0000250" key="1"/>
<evidence type="ECO:0000255" key="2"/>
<evidence type="ECO:0000255" key="3">
    <source>
        <dbReference type="PROSITE-ProRule" id="PRU00169"/>
    </source>
</evidence>
<evidence type="ECO:0000255" key="4">
    <source>
        <dbReference type="PROSITE-ProRule" id="PRU00625"/>
    </source>
</evidence>
<evidence type="ECO:0000256" key="5">
    <source>
        <dbReference type="SAM" id="MobiDB-lite"/>
    </source>
</evidence>
<evidence type="ECO:0000269" key="6">
    <source>
    </source>
</evidence>
<evidence type="ECO:0000305" key="7"/>
<comment type="function">
    <text evidence="1">Transcriptional activator that binds specifically to the DNA sequence 5'-[AG]GATT-3'. Functions as a response regulator involved in His-to-Asp phosphorelay signal transduction system. Phosphorylation of the Asp residue in the receiver domain activates the ability of the protein to promote the transcription of target genes. Could directly activate some type-A response regulators in response to cytokinins (By similarity).</text>
</comment>
<comment type="subunit">
    <text evidence="1">Binds the target DNA as a monomer.</text>
</comment>
<comment type="interaction">
    <interactant intactId="EBI-1100737">
        <id>Q8L9Y3</id>
    </interactant>
    <interactant intactId="EBI-1100634">
        <id>Q9C5U2</id>
        <label>AHK2</label>
    </interactant>
    <organismsDiffer>false</organismsDiffer>
    <experiments>3</experiments>
</comment>
<comment type="interaction">
    <interactant intactId="EBI-1100737">
        <id>Q8L9Y3</id>
    </interactant>
    <interactant intactId="EBI-1100673">
        <id>Q9ZNV9</id>
        <label>AHP1</label>
    </interactant>
    <organismsDiffer>false</organismsDiffer>
    <experiments>2</experiments>
</comment>
<comment type="interaction">
    <interactant intactId="EBI-1100737">
        <id>Q8L9Y3</id>
    </interactant>
    <interactant intactId="EBI-1100687">
        <id>Q9ZNV8</id>
        <label>AHP2</label>
    </interactant>
    <organismsDiffer>false</organismsDiffer>
    <experiments>3</experiments>
</comment>
<comment type="interaction">
    <interactant intactId="EBI-1100737">
        <id>Q8L9Y3</id>
    </interactant>
    <interactant intactId="EBI-1100711">
        <id>Q9SAZ5</id>
        <label>AHP3</label>
    </interactant>
    <organismsDiffer>false</organismsDiffer>
    <experiments>3</experiments>
</comment>
<comment type="interaction">
    <interactant intactId="EBI-1100737">
        <id>Q8L9Y3</id>
    </interactant>
    <interactant intactId="EBI-1100737">
        <id>Q8L9Y3</id>
        <label>ARR14</label>
    </interactant>
    <organismsDiffer>false</organismsDiffer>
    <experiments>2</experiments>
</comment>
<comment type="interaction">
    <interactant intactId="EBI-1100737">
        <id>Q8L9Y3</id>
    </interactant>
    <interactant intactId="EBI-763232">
        <id>O80931</id>
        <label>AS1</label>
    </interactant>
    <organismsDiffer>false</organismsDiffer>
    <experiments>4</experiments>
</comment>
<comment type="interaction">
    <interactant intactId="EBI-1100737">
        <id>Q8L9Y3</id>
    </interactant>
    <interactant intactId="EBI-1100725">
        <id>Q67XQ1</id>
        <label>At1g03430</label>
    </interactant>
    <organismsDiffer>false</organismsDiffer>
    <experiments>3</experiments>
</comment>
<comment type="interaction">
    <interactant intactId="EBI-1100737">
        <id>Q8L9Y3</id>
    </interactant>
    <interactant intactId="EBI-4473692">
        <id>O80575</id>
        <label>At2g44050</label>
    </interactant>
    <organismsDiffer>false</organismsDiffer>
    <experiments>3</experiments>
</comment>
<comment type="interaction">
    <interactant intactId="EBI-1100737">
        <id>Q8L9Y3</id>
    </interactant>
    <interactant intactId="EBI-4426649">
        <id>Q17TI5</id>
        <label>BRX</label>
    </interactant>
    <organismsDiffer>false</organismsDiffer>
    <experiments>3</experiments>
</comment>
<comment type="interaction">
    <interactant intactId="EBI-1100737">
        <id>Q8L9Y3</id>
    </interactant>
    <interactant intactId="EBI-4426914">
        <id>Q8VYD2</id>
        <label>GPL1</label>
    </interactant>
    <organismsDiffer>false</organismsDiffer>
    <experiments>3</experiments>
</comment>
<comment type="interaction">
    <interactant intactId="EBI-1100737">
        <id>Q8L9Y3</id>
    </interactant>
    <interactant intactId="EBI-617608">
        <id>Q38830</id>
        <label>IAA12</label>
    </interactant>
    <organismsDiffer>false</organismsDiffer>
    <experiments>3</experiments>
</comment>
<comment type="interaction">
    <interactant intactId="EBI-1100737">
        <id>Q8L9Y3</id>
    </interactant>
    <interactant intactId="EBI-632272">
        <id>O24410</id>
        <label>IAA20</label>
    </interactant>
    <organismsDiffer>false</organismsDiffer>
    <experiments>3</experiments>
</comment>
<comment type="interaction">
    <interactant intactId="EBI-1100737">
        <id>Q8L9Y3</id>
    </interactant>
    <interactant intactId="EBI-3947418">
        <id>Q8LAL2</id>
        <label>IAA26</label>
    </interactant>
    <organismsDiffer>false</organismsDiffer>
    <experiments>3</experiments>
</comment>
<comment type="interaction">
    <interactant intactId="EBI-1100737">
        <id>Q8L9Y3</id>
    </interactant>
    <interactant intactId="EBI-3133404">
        <id>Q9XFM0</id>
        <label>IAA28</label>
    </interactant>
    <organismsDiffer>false</organismsDiffer>
    <experiments>3</experiments>
</comment>
<comment type="interaction">
    <interactant intactId="EBI-1100737">
        <id>Q8L9Y3</id>
    </interactant>
    <interactant intactId="EBI-307174">
        <id>Q38822</id>
        <label>IAA3</label>
    </interactant>
    <organismsDiffer>false</organismsDiffer>
    <experiments>3</experiments>
</comment>
<comment type="interaction">
    <interactant intactId="EBI-1100737">
        <id>Q8L9Y3</id>
    </interactant>
    <interactant intactId="EBI-3946710">
        <id>Q9M1R4</id>
        <label>IAA30</label>
    </interactant>
    <organismsDiffer>false</organismsDiffer>
    <experiments>3</experiments>
</comment>
<comment type="interaction">
    <interactant intactId="EBI-1100737">
        <id>Q8L9Y3</id>
    </interactant>
    <interactant intactId="EBI-3946408">
        <id>Q8H174</id>
        <label>IAA31</label>
    </interactant>
    <organismsDiffer>false</organismsDiffer>
    <experiments>3</experiments>
</comment>
<comment type="interaction">
    <interactant intactId="EBI-1100737">
        <id>Q8L9Y3</id>
    </interactant>
    <interactant intactId="EBI-4446992">
        <id>O81313</id>
        <label>IND</label>
    </interactant>
    <organismsDiffer>false</organismsDiffer>
    <experiments>4</experiments>
</comment>
<comment type="interaction">
    <interactant intactId="EBI-1100737">
        <id>Q8L9Y3</id>
    </interactant>
    <interactant intactId="EBI-15192813">
        <id>Q9FDW1</id>
        <label>MYB44</label>
    </interactant>
    <organismsDiffer>false</organismsDiffer>
    <experiments>3</experiments>
</comment>
<comment type="interaction">
    <interactant intactId="EBI-1100737">
        <id>Q8L9Y3</id>
    </interactant>
    <interactant intactId="EBI-1238013">
        <id>O22179</id>
        <label>MYB70</label>
    </interactant>
    <organismsDiffer>false</organismsDiffer>
    <experiments>5</experiments>
</comment>
<comment type="interaction">
    <interactant intactId="EBI-1100737">
        <id>Q8L9Y3</id>
    </interactant>
    <interactant intactId="EBI-25506855">
        <id>O23160</id>
        <label>MYB73</label>
    </interactant>
    <organismsDiffer>false</organismsDiffer>
    <experiments>5</experiments>
</comment>
<comment type="interaction">
    <interactant intactId="EBI-1100737">
        <id>Q8L9Y3</id>
    </interactant>
    <interactant intactId="EBI-927172">
        <id>O81127</id>
        <label>RSZ21</label>
    </interactant>
    <organismsDiffer>false</organismsDiffer>
    <experiments>3</experiments>
</comment>
<comment type="interaction">
    <interactant intactId="EBI-1100737">
        <id>Q8L9Y3</id>
    </interactant>
    <interactant intactId="EBI-15192297">
        <id>Q9LQF0</id>
        <label>TCP23</label>
    </interactant>
    <organismsDiffer>false</organismsDiffer>
    <experiments>3</experiments>
</comment>
<comment type="interaction">
    <interactant intactId="EBI-1100737">
        <id>Q8L9Y3</id>
    </interactant>
    <interactant intactId="EBI-4426557">
        <id>Q84MB2</id>
        <label>TIFY8</label>
    </interactant>
    <organismsDiffer>false</organismsDiffer>
    <experiments>6</experiments>
</comment>
<comment type="interaction">
    <interactant intactId="EBI-1100737">
        <id>Q8L9Y3</id>
    </interactant>
    <interactant intactId="EBI-346271">
        <id>Q9SHZ6</id>
        <label>UBA1A</label>
    </interactant>
    <organismsDiffer>false</organismsDiffer>
    <experiments>5</experiments>
</comment>
<comment type="interaction">
    <interactant intactId="EBI-1100737">
        <id>Q8L9Y3</id>
    </interactant>
    <interactant intactId="EBI-1993263">
        <id>Q8GWF1</id>
        <label>WRKY38</label>
    </interactant>
    <organismsDiffer>false</organismsDiffer>
    <experiments>3</experiments>
</comment>
<comment type="interaction">
    <interactant intactId="EBI-1100737">
        <id>Q8L9Y3</id>
    </interactant>
    <interactant intactId="EBI-2112777">
        <id>Q9SK33</id>
        <label>WRKY60</label>
    </interactant>
    <organismsDiffer>false</organismsDiffer>
    <experiments>3</experiments>
</comment>
<comment type="subcellular location">
    <subcellularLocation>
        <location>Nucleus</location>
    </subcellularLocation>
</comment>
<comment type="tissue specificity">
    <text evidence="6">Predominantly expressed in young leaf tissue.</text>
</comment>
<comment type="PTM">
    <text>Two-component system major event consists of a His-to-Asp phosphorelay between a sensor histidine kinase (HK) and a response regulator (RR). In plants, the His-to-Asp phosphorelay involves an additional intermediate named Histidine-containing phosphotransfer protein (HPt). This multistep phosphorelay consists of a His-Asp-His-Asp sequential transfer of a phosphate group between first a His and an Asp of the HK protein, followed by the transfer to a conserved His of the HPt protein and finally the transfer to an Asp in the receiver domain of the RR protein.</text>
</comment>
<comment type="similarity">
    <text evidence="7">Belongs to the ARR family. Type-B subfamily.</text>
</comment>
<organism>
    <name type="scientific">Arabidopsis thaliana</name>
    <name type="common">Mouse-ear cress</name>
    <dbReference type="NCBI Taxonomy" id="3702"/>
    <lineage>
        <taxon>Eukaryota</taxon>
        <taxon>Viridiplantae</taxon>
        <taxon>Streptophyta</taxon>
        <taxon>Embryophyta</taxon>
        <taxon>Tracheophyta</taxon>
        <taxon>Spermatophyta</taxon>
        <taxon>Magnoliopsida</taxon>
        <taxon>eudicotyledons</taxon>
        <taxon>Gunneridae</taxon>
        <taxon>Pentapetalae</taxon>
        <taxon>rosids</taxon>
        <taxon>malvids</taxon>
        <taxon>Brassicales</taxon>
        <taxon>Brassicaceae</taxon>
        <taxon>Camelineae</taxon>
        <taxon>Arabidopsis</taxon>
    </lineage>
</organism>
<dbReference type="EMBL" id="AC006069">
    <property type="protein sequence ID" value="AAD12696.1"/>
    <property type="molecule type" value="Genomic_DNA"/>
</dbReference>
<dbReference type="EMBL" id="CP002685">
    <property type="protein sequence ID" value="AEC05495.1"/>
    <property type="molecule type" value="Genomic_DNA"/>
</dbReference>
<dbReference type="EMBL" id="AY099726">
    <property type="protein sequence ID" value="AAM20577.1"/>
    <property type="molecule type" value="mRNA"/>
</dbReference>
<dbReference type="EMBL" id="AY128887">
    <property type="protein sequence ID" value="AAM91287.1"/>
    <property type="molecule type" value="mRNA"/>
</dbReference>
<dbReference type="EMBL" id="AY088149">
    <property type="protein sequence ID" value="AAM65694.1"/>
    <property type="molecule type" value="mRNA"/>
</dbReference>
<dbReference type="PIR" id="G84428">
    <property type="entry name" value="G84428"/>
</dbReference>
<dbReference type="RefSeq" id="NP_178285.1">
    <property type="nucleotide sequence ID" value="NM_126237.3"/>
</dbReference>
<dbReference type="SMR" id="Q8L9Y3"/>
<dbReference type="BioGRID" id="110">
    <property type="interactions" value="76"/>
</dbReference>
<dbReference type="FunCoup" id="Q8L9Y3">
    <property type="interactions" value="298"/>
</dbReference>
<dbReference type="IntAct" id="Q8L9Y3">
    <property type="interactions" value="100"/>
</dbReference>
<dbReference type="STRING" id="3702.Q8L9Y3"/>
<dbReference type="PaxDb" id="3702-AT2G01760.1"/>
<dbReference type="EnsemblPlants" id="AT2G01760.1">
    <property type="protein sequence ID" value="AT2G01760.1"/>
    <property type="gene ID" value="AT2G01760"/>
</dbReference>
<dbReference type="GeneID" id="814707"/>
<dbReference type="Gramene" id="AT2G01760.1">
    <property type="protein sequence ID" value="AT2G01760.1"/>
    <property type="gene ID" value="AT2G01760"/>
</dbReference>
<dbReference type="KEGG" id="ath:AT2G01760"/>
<dbReference type="Araport" id="AT2G01760"/>
<dbReference type="TAIR" id="AT2G01760">
    <property type="gene designation" value="RR14"/>
</dbReference>
<dbReference type="eggNOG" id="KOG1601">
    <property type="taxonomic scope" value="Eukaryota"/>
</dbReference>
<dbReference type="HOGENOM" id="CLU_061273_2_1_1"/>
<dbReference type="InParanoid" id="Q8L9Y3"/>
<dbReference type="PhylomeDB" id="Q8L9Y3"/>
<dbReference type="PRO" id="PR:Q8L9Y3"/>
<dbReference type="Proteomes" id="UP000006548">
    <property type="component" value="Chromosome 2"/>
</dbReference>
<dbReference type="ExpressionAtlas" id="Q8L9Y3">
    <property type="expression patterns" value="baseline and differential"/>
</dbReference>
<dbReference type="GO" id="GO:0005634">
    <property type="term" value="C:nucleus"/>
    <property type="evidence" value="ECO:0007669"/>
    <property type="project" value="UniProtKB-SubCell"/>
</dbReference>
<dbReference type="GO" id="GO:0003677">
    <property type="term" value="F:DNA binding"/>
    <property type="evidence" value="ECO:0007669"/>
    <property type="project" value="UniProtKB-KW"/>
</dbReference>
<dbReference type="GO" id="GO:0003700">
    <property type="term" value="F:DNA-binding transcription factor activity"/>
    <property type="evidence" value="ECO:0000250"/>
    <property type="project" value="TAIR"/>
</dbReference>
<dbReference type="GO" id="GO:0042802">
    <property type="term" value="F:identical protein binding"/>
    <property type="evidence" value="ECO:0000353"/>
    <property type="project" value="IntAct"/>
</dbReference>
<dbReference type="GO" id="GO:0000156">
    <property type="term" value="F:phosphorelay response regulator activity"/>
    <property type="evidence" value="ECO:0000250"/>
    <property type="project" value="TAIR"/>
</dbReference>
<dbReference type="GO" id="GO:0009736">
    <property type="term" value="P:cytokinin-activated signaling pathway"/>
    <property type="evidence" value="ECO:0000304"/>
    <property type="project" value="TAIR"/>
</dbReference>
<dbReference type="CDD" id="cd17584">
    <property type="entry name" value="REC_typeB_ARR-like"/>
    <property type="match status" value="1"/>
</dbReference>
<dbReference type="FunFam" id="1.10.10.60:FF:000007">
    <property type="entry name" value="Two-component response regulator"/>
    <property type="match status" value="1"/>
</dbReference>
<dbReference type="FunFam" id="3.40.50.2300:FF:000408">
    <property type="entry name" value="Two-component response regulator"/>
    <property type="match status" value="1"/>
</dbReference>
<dbReference type="Gene3D" id="3.40.50.2300">
    <property type="match status" value="1"/>
</dbReference>
<dbReference type="Gene3D" id="1.10.10.60">
    <property type="entry name" value="Homeodomain-like"/>
    <property type="match status" value="1"/>
</dbReference>
<dbReference type="InterPro" id="IPR045279">
    <property type="entry name" value="ARR-like"/>
</dbReference>
<dbReference type="InterPro" id="IPR011006">
    <property type="entry name" value="CheY-like_superfamily"/>
</dbReference>
<dbReference type="InterPro" id="IPR009057">
    <property type="entry name" value="Homeodomain-like_sf"/>
</dbReference>
<dbReference type="InterPro" id="IPR017930">
    <property type="entry name" value="Myb_dom"/>
</dbReference>
<dbReference type="InterPro" id="IPR006447">
    <property type="entry name" value="Myb_dom_plants"/>
</dbReference>
<dbReference type="InterPro" id="IPR017053">
    <property type="entry name" value="Response_reg_B-typ_pln"/>
</dbReference>
<dbReference type="InterPro" id="IPR001005">
    <property type="entry name" value="SANT/Myb"/>
</dbReference>
<dbReference type="InterPro" id="IPR001789">
    <property type="entry name" value="Sig_transdc_resp-reg_receiver"/>
</dbReference>
<dbReference type="NCBIfam" id="TIGR01557">
    <property type="entry name" value="myb_SHAQKYF"/>
    <property type="match status" value="1"/>
</dbReference>
<dbReference type="PANTHER" id="PTHR43874">
    <property type="entry name" value="TWO-COMPONENT RESPONSE REGULATOR"/>
    <property type="match status" value="1"/>
</dbReference>
<dbReference type="PANTHER" id="PTHR43874:SF123">
    <property type="entry name" value="TWO-COMPONENT RESPONSE REGULATOR ARR14"/>
    <property type="match status" value="1"/>
</dbReference>
<dbReference type="Pfam" id="PF00249">
    <property type="entry name" value="Myb_DNA-binding"/>
    <property type="match status" value="1"/>
</dbReference>
<dbReference type="Pfam" id="PF00072">
    <property type="entry name" value="Response_reg"/>
    <property type="match status" value="1"/>
</dbReference>
<dbReference type="PIRSF" id="PIRSF036392">
    <property type="entry name" value="RR_ARR_type-B"/>
    <property type="match status" value="1"/>
</dbReference>
<dbReference type="SMART" id="SM00448">
    <property type="entry name" value="REC"/>
    <property type="match status" value="1"/>
</dbReference>
<dbReference type="SUPFAM" id="SSF52172">
    <property type="entry name" value="CheY-like"/>
    <property type="match status" value="1"/>
</dbReference>
<dbReference type="SUPFAM" id="SSF46689">
    <property type="entry name" value="Homeodomain-like"/>
    <property type="match status" value="1"/>
</dbReference>
<dbReference type="PROSITE" id="PS51294">
    <property type="entry name" value="HTH_MYB"/>
    <property type="match status" value="1"/>
</dbReference>
<dbReference type="PROSITE" id="PS50110">
    <property type="entry name" value="RESPONSE_REGULATORY"/>
    <property type="match status" value="1"/>
</dbReference>
<sequence length="382" mass="43099">MPINDQFPSGLRILVVDDDTSCLFILEKMLLRLMYQVTICSQADVALTILRERKDSFDLVLSDVHMPGMNGYNLLQQVGLLEMDLPVIMMSVDGRTTTVMTGINHGACDYLIKPIRPEELKNIWQHVVRRKCVMKKELRSSQALEDNKNSGSLETVVVSVSECSEESLMKCRNKKKKKKRSVDRDDNEDDLLLDPGNSKKSRVVWSIELHQQFVNAVNKLGIDKAVPKRILELMNVPGLSRENVASHLQKFRLYLKRLSGEASQSNDSESTKRYENIQALVSSGQLHPQTLAALFGQPIDNHHSASFGVWIPNDNLGRSQNEHFSVDVSSASNRPVSVAVHGLSSSANFRQRGDVNNNRIRQGYGSNVNEESWILERSSRQR</sequence>
<keyword id="KW-0010">Activator</keyword>
<keyword id="KW-0932">Cytokinin signaling pathway</keyword>
<keyword id="KW-0238">DNA-binding</keyword>
<keyword id="KW-0539">Nucleus</keyword>
<keyword id="KW-0597">Phosphoprotein</keyword>
<keyword id="KW-1185">Reference proteome</keyword>
<keyword id="KW-0804">Transcription</keyword>
<keyword id="KW-0805">Transcription regulation</keyword>
<keyword id="KW-0902">Two-component regulatory system</keyword>